<gene>
    <name evidence="4" type="primary">UGT75C1</name>
    <name evidence="5" type="ordered locus">Solyc09g092500.1.1</name>
</gene>
<proteinExistence type="evidence at protein level"/>
<protein>
    <recommendedName>
        <fullName evidence="4">UDP-glycosyltransferase 75C1</fullName>
        <shortName evidence="5">Abscisic acid beta-glucosyltransferase</shortName>
        <shortName evidence="5">Indole-3-acetate beta-glucosyltransferase</shortName>
        <shortName evidence="4">SlUGT75C1</shortName>
        <ecNumber evidence="3">2.4.1.121</ecNumber>
        <ecNumber evidence="3">2.4.1.263</ecNumber>
    </recommendedName>
</protein>
<comment type="function">
    <text evidence="3">Glucosyltransferase acting on both abscisic acid (ABA) and auxin (IAA). Required for ABA-mediated fruit ripening, seed germination, and negative responses to drought.</text>
</comment>
<comment type="catalytic activity">
    <reaction evidence="3">
        <text>2-cis-(+)-abscisate + UDP-alpha-D-glucose = beta-D-glucopyranosyl cis-(+)-abscisate + UDP</text>
        <dbReference type="Rhea" id="RHEA:31031"/>
        <dbReference type="ChEBI" id="CHEBI:22151"/>
        <dbReference type="ChEBI" id="CHEBI:37569"/>
        <dbReference type="ChEBI" id="CHEBI:58223"/>
        <dbReference type="ChEBI" id="CHEBI:58885"/>
        <dbReference type="EC" id="2.4.1.263"/>
    </reaction>
</comment>
<comment type="catalytic activity">
    <reaction evidence="3">
        <text>(indol-3-yl)acetate + UDP-alpha-D-glucose = 1-O-(indol-3-ylacetyl)-beta-D-glucose + UDP</text>
        <dbReference type="Rhea" id="RHEA:14921"/>
        <dbReference type="ChEBI" id="CHEBI:17990"/>
        <dbReference type="ChEBI" id="CHEBI:30854"/>
        <dbReference type="ChEBI" id="CHEBI:58223"/>
        <dbReference type="ChEBI" id="CHEBI:58885"/>
        <dbReference type="EC" id="2.4.1.121"/>
    </reaction>
</comment>
<comment type="biophysicochemical properties">
    <kinetics>
        <KM evidence="3">1.27 mM for abscisic acid</KM>
        <Vmax evidence="3">0.026 umol/min/ug enzyme with abscisic acid as substrate (in the presence of UDP-glucose)</Vmax>
    </kinetics>
    <phDependence>
        <text evidence="3">Optimum pH is 3.67-8.</text>
    </phDependence>
    <temperatureDependence>
        <text evidence="3">Optimum temperature is 37 degrees Celsius.</text>
    </temperatureDependence>
</comment>
<comment type="subcellular location">
    <subcellularLocation>
        <location evidence="3">Cytoplasm</location>
    </subcellularLocation>
    <subcellularLocation>
        <location evidence="3">Nucleus</location>
    </subcellularLocation>
</comment>
<comment type="tissue specificity">
    <text evidence="3">Expressed in flowers and fruits, especially in pulp, and, at lower levels, in seeds.</text>
</comment>
<comment type="developmental stage">
    <text evidence="3">Highly expressed during fruit ripening and flower development. In flowers, present at low levels during early developmental stages and later accumulates rapidly to reach a peak at the pre-blooming stage. Highly expressed in the sporogenous cells in the anther, pistil stigma and ovule and in basal vascular bundles. In fruits, accumulates progressively in the pulp with a maximum level at the pink stage. Highly expressed in the seeds, fruit peel and vascular tissues.</text>
</comment>
<comment type="induction">
    <text evidence="3">Induced by abscisic acid (ABA).</text>
</comment>
<comment type="disruption phenotype">
    <text evidence="3">Increased sensitivity to exogenous abscisic acid (ABA) and increased resistance to drought stress due to smaller stomatal apertures. Acceleration of fruit ripening with abnormally long shape by enhancing ABA levels and promoting the early release of ethylene (IAA) in immature fruit, and associated with altered expression of fruit ripening genes (e.g. ethylene biosynthesis and cell wall catabolism). Up-regulation of the expression of CYP707A2, which encodes an ABA 8'-hydroxylase, thus preventing excessive ABA accumulation. Seeds exhibit delayed germination and root growth.</text>
</comment>
<comment type="similarity">
    <text evidence="5">Belongs to the UDP-glycosyltransferase family.</text>
</comment>
<name>U75C1_SOLLC</name>
<reference key="1">
    <citation type="journal article" date="2012" name="Nature">
        <title>The tomato genome sequence provides insights into fleshy fruit evolution.</title>
        <authorList>
            <consortium name="Tomato Genome Consortium"/>
        </authorList>
    </citation>
    <scope>NUCLEOTIDE SEQUENCE [LARGE SCALE GENOMIC DNA]</scope>
    <source>
        <strain>cv. Heinz 1706</strain>
    </source>
</reference>
<reference key="2">
    <citation type="journal article" date="2017" name="Plant J.">
        <title>Suppressing ABA uridine diphosphate glucosyltransferase (SlUGT75C1) alters fruit ripening and the stress response in tomato.</title>
        <authorList>
            <person name="Sun Y."/>
            <person name="Ji K."/>
            <person name="Liang B."/>
            <person name="Du Y."/>
            <person name="Jiang L."/>
            <person name="Wang J."/>
            <person name="Kai W."/>
            <person name="Zhang Y."/>
            <person name="Zhai X."/>
            <person name="Chen P."/>
            <person name="Wang H."/>
            <person name="Leng P."/>
        </authorList>
    </citation>
    <scope>FUNCTION</scope>
    <scope>DISRUPTION PHENOTYPE</scope>
    <scope>CATALYTIC ACTIVITY</scope>
    <scope>BIOPHYSICOCHEMICAL PROPERTIES</scope>
    <scope>DEVELOPMENTAL STAGE</scope>
    <scope>TISSUE SPECIFICITY</scope>
    <scope>SUBCELLULAR LOCATION</scope>
    <scope>INDUCTION BY ABSCISIC ACID</scope>
    <source>
        <strain>cv. MicroTom</strain>
    </source>
</reference>
<evidence type="ECO:0000250" key="1">
    <source>
        <dbReference type="UniProtKB" id="A0A0A1HA03"/>
    </source>
</evidence>
<evidence type="ECO:0000250" key="2">
    <source>
        <dbReference type="UniProtKB" id="P51094"/>
    </source>
</evidence>
<evidence type="ECO:0000269" key="3">
    <source>
    </source>
</evidence>
<evidence type="ECO:0000303" key="4">
    <source>
    </source>
</evidence>
<evidence type="ECO:0000305" key="5"/>
<dbReference type="EC" id="2.4.1.121" evidence="3"/>
<dbReference type="EC" id="2.4.1.263" evidence="3"/>
<dbReference type="EMBL" id="CM001072">
    <property type="status" value="NOT_ANNOTATED_CDS"/>
    <property type="molecule type" value="Genomic_DNA"/>
</dbReference>
<dbReference type="RefSeq" id="NP_001348274.1">
    <property type="nucleotide sequence ID" value="NM_001361345.1"/>
</dbReference>
<dbReference type="RefSeq" id="XP_004247894.1">
    <property type="nucleotide sequence ID" value="XM_004247846.3"/>
</dbReference>
<dbReference type="SMR" id="K4CWS6"/>
<dbReference type="FunCoup" id="K4CWS6">
    <property type="interactions" value="59"/>
</dbReference>
<dbReference type="STRING" id="4081.K4CWS6"/>
<dbReference type="PaxDb" id="4081-Solyc09g092500.1.1"/>
<dbReference type="GeneID" id="101250450"/>
<dbReference type="eggNOG" id="KOG1192">
    <property type="taxonomic scope" value="Eukaryota"/>
</dbReference>
<dbReference type="HOGENOM" id="CLU_001724_0_1_1"/>
<dbReference type="InParanoid" id="K4CWS6"/>
<dbReference type="OrthoDB" id="5835829at2759"/>
<dbReference type="PhylomeDB" id="K4CWS6"/>
<dbReference type="SABIO-RK" id="K4CWS6"/>
<dbReference type="Proteomes" id="UP000004994">
    <property type="component" value="Unplaced"/>
</dbReference>
<dbReference type="ExpressionAtlas" id="K4CWS6">
    <property type="expression patterns" value="baseline and differential"/>
</dbReference>
<dbReference type="GO" id="GO:0005737">
    <property type="term" value="C:cytoplasm"/>
    <property type="evidence" value="ECO:0000314"/>
    <property type="project" value="UniProtKB"/>
</dbReference>
<dbReference type="GO" id="GO:0005634">
    <property type="term" value="C:nucleus"/>
    <property type="evidence" value="ECO:0000314"/>
    <property type="project" value="UniProtKB"/>
</dbReference>
<dbReference type="GO" id="GO:0010294">
    <property type="term" value="F:abscisic acid glucosyltransferase activity"/>
    <property type="evidence" value="ECO:0000314"/>
    <property type="project" value="UniProtKB"/>
</dbReference>
<dbReference type="GO" id="GO:0047215">
    <property type="term" value="F:indole-3-acetate beta-glucosyltransferase activity"/>
    <property type="evidence" value="ECO:0000314"/>
    <property type="project" value="UniProtKB"/>
</dbReference>
<dbReference type="GO" id="GO:0080043">
    <property type="term" value="F:quercetin 3-O-glucosyltransferase activity"/>
    <property type="evidence" value="ECO:0000318"/>
    <property type="project" value="GO_Central"/>
</dbReference>
<dbReference type="GO" id="GO:0080044">
    <property type="term" value="F:quercetin 7-O-glucosyltransferase activity"/>
    <property type="evidence" value="ECO:0000318"/>
    <property type="project" value="GO_Central"/>
</dbReference>
<dbReference type="GO" id="GO:0009738">
    <property type="term" value="P:abscisic acid-activated signaling pathway"/>
    <property type="evidence" value="ECO:0007669"/>
    <property type="project" value="UniProtKB-KW"/>
</dbReference>
<dbReference type="GO" id="GO:0009835">
    <property type="term" value="P:fruit ripening"/>
    <property type="evidence" value="ECO:0000315"/>
    <property type="project" value="UniProtKB"/>
</dbReference>
<dbReference type="GO" id="GO:0080148">
    <property type="term" value="P:negative regulation of response to water deprivation"/>
    <property type="evidence" value="ECO:0000315"/>
    <property type="project" value="UniProtKB"/>
</dbReference>
<dbReference type="GO" id="GO:0009787">
    <property type="term" value="P:regulation of abscisic acid-activated signaling pathway"/>
    <property type="evidence" value="ECO:0000315"/>
    <property type="project" value="UniProtKB"/>
</dbReference>
<dbReference type="GO" id="GO:0009737">
    <property type="term" value="P:response to abscisic acid"/>
    <property type="evidence" value="ECO:0000270"/>
    <property type="project" value="UniProtKB"/>
</dbReference>
<dbReference type="GO" id="GO:0009845">
    <property type="term" value="P:seed germination"/>
    <property type="evidence" value="ECO:0000315"/>
    <property type="project" value="UniProtKB"/>
</dbReference>
<dbReference type="CDD" id="cd03784">
    <property type="entry name" value="GT1_Gtf-like"/>
    <property type="match status" value="1"/>
</dbReference>
<dbReference type="FunFam" id="3.40.50.2000:FF:000019">
    <property type="entry name" value="Glycosyltransferase"/>
    <property type="match status" value="1"/>
</dbReference>
<dbReference type="FunFam" id="3.40.50.2000:FF:000167">
    <property type="entry name" value="Glycosyltransferase"/>
    <property type="match status" value="1"/>
</dbReference>
<dbReference type="Gene3D" id="3.40.50.2000">
    <property type="entry name" value="Glycogen Phosphorylase B"/>
    <property type="match status" value="2"/>
</dbReference>
<dbReference type="InterPro" id="IPR002213">
    <property type="entry name" value="UDP_glucos_trans"/>
</dbReference>
<dbReference type="InterPro" id="IPR035595">
    <property type="entry name" value="UDP_glycos_trans_CS"/>
</dbReference>
<dbReference type="PANTHER" id="PTHR11926">
    <property type="entry name" value="GLUCOSYL/GLUCURONOSYL TRANSFERASES"/>
    <property type="match status" value="1"/>
</dbReference>
<dbReference type="PANTHER" id="PTHR11926:SF870">
    <property type="entry name" value="UDP-GLYCOSYLTRANSFERASE 75B1"/>
    <property type="match status" value="1"/>
</dbReference>
<dbReference type="Pfam" id="PF00201">
    <property type="entry name" value="UDPGT"/>
    <property type="match status" value="1"/>
</dbReference>
<dbReference type="SUPFAM" id="SSF53756">
    <property type="entry name" value="UDP-Glycosyltransferase/glycogen phosphorylase"/>
    <property type="match status" value="1"/>
</dbReference>
<dbReference type="PROSITE" id="PS00375">
    <property type="entry name" value="UDPGT"/>
    <property type="match status" value="1"/>
</dbReference>
<keyword id="KW-0938">Abscisic acid signaling pathway</keyword>
<keyword id="KW-0963">Cytoplasm</keyword>
<keyword id="KW-0217">Developmental protein</keyword>
<keyword id="KW-0328">Glycosyltransferase</keyword>
<keyword id="KW-0539">Nucleus</keyword>
<keyword id="KW-1185">Reference proteome</keyword>
<keyword id="KW-0808">Transferase</keyword>
<accession>K4CWS6</accession>
<organism>
    <name type="scientific">Solanum lycopersicum</name>
    <name type="common">Tomato</name>
    <name type="synonym">Lycopersicon esculentum</name>
    <dbReference type="NCBI Taxonomy" id="4081"/>
    <lineage>
        <taxon>Eukaryota</taxon>
        <taxon>Viridiplantae</taxon>
        <taxon>Streptophyta</taxon>
        <taxon>Embryophyta</taxon>
        <taxon>Tracheophyta</taxon>
        <taxon>Spermatophyta</taxon>
        <taxon>Magnoliopsida</taxon>
        <taxon>eudicotyledons</taxon>
        <taxon>Gunneridae</taxon>
        <taxon>Pentapetalae</taxon>
        <taxon>asterids</taxon>
        <taxon>lamiids</taxon>
        <taxon>Solanales</taxon>
        <taxon>Solanaceae</taxon>
        <taxon>Solanoideae</taxon>
        <taxon>Solaneae</taxon>
        <taxon>Solanum</taxon>
        <taxon>Solanum subgen. Lycopersicon</taxon>
    </lineage>
</organism>
<feature type="chain" id="PRO_0000445697" description="UDP-glycosyltransferase 75C1">
    <location>
        <begin position="1"/>
        <end position="470"/>
    </location>
</feature>
<feature type="active site" description="Proton acceptor" evidence="1">
    <location>
        <position position="16"/>
    </location>
</feature>
<feature type="binding site" evidence="2">
    <location>
        <position position="16"/>
    </location>
    <ligand>
        <name>an anthocyanidin</name>
        <dbReference type="ChEBI" id="CHEBI:143576"/>
    </ligand>
</feature>
<feature type="binding site" evidence="1">
    <location>
        <position position="347"/>
    </location>
    <ligand>
        <name>UDP-alpha-D-glucose</name>
        <dbReference type="ChEBI" id="CHEBI:58885"/>
    </ligand>
</feature>
<feature type="binding site" evidence="1">
    <location>
        <position position="362"/>
    </location>
    <ligand>
        <name>UDP-alpha-D-glucose</name>
        <dbReference type="ChEBI" id="CHEBI:58885"/>
    </ligand>
</feature>
<feature type="binding site" evidence="1">
    <location>
        <position position="365"/>
    </location>
    <ligand>
        <name>UDP-alpha-D-glucose</name>
        <dbReference type="ChEBI" id="CHEBI:58885"/>
    </ligand>
</feature>
<feature type="binding site" evidence="1">
    <location>
        <position position="366"/>
    </location>
    <ligand>
        <name>UDP-alpha-D-glucose</name>
        <dbReference type="ChEBI" id="CHEBI:58885"/>
    </ligand>
</feature>
<feature type="binding site" evidence="1">
    <location>
        <position position="367"/>
    </location>
    <ligand>
        <name>UDP-alpha-D-glucose</name>
        <dbReference type="ChEBI" id="CHEBI:58885"/>
    </ligand>
</feature>
<feature type="binding site" evidence="1">
    <location>
        <position position="370"/>
    </location>
    <ligand>
        <name>UDP-alpha-D-glucose</name>
        <dbReference type="ChEBI" id="CHEBI:58885"/>
    </ligand>
</feature>
<feature type="binding site" evidence="1">
    <location>
        <position position="386"/>
    </location>
    <ligand>
        <name>UDP-alpha-D-glucose</name>
        <dbReference type="ChEBI" id="CHEBI:58885"/>
    </ligand>
</feature>
<feature type="binding site" evidence="1">
    <location>
        <position position="387"/>
    </location>
    <ligand>
        <name>UDP-alpha-D-glucose</name>
        <dbReference type="ChEBI" id="CHEBI:58885"/>
    </ligand>
</feature>
<sequence>MVQPHVLLVTFPAQGHINPSLQFAKRLIEMGIEVTFTTSVFAHRRMAKIAASTAPKGLNLAAFSDGFDDGFKSNVDDSKRYMSEIRSRGSQTLRDVILKSSDEGRPVTSLVYTLLLPWAAEVARELHIPSALLWIQPATVLDIYYYYFNGYEDEMKCSSSNDPNWSIQLPRLPLLKSQDLPSFLVSSSSKDDKYSFALPTFKEQLDTLDGEENPKVLVNTFDALELEPLKAIEKYNLIGIGPLIPSSFLGGKDSLESSFGGDLFQKSNDDYMEWLNTKPKSSIVYISFGSLLNLSRNQKEEIAKGLIEIQRPFLWVIRDQEEEKEEEKLSCMMELEKQGKIVPWCSQLEVLTHPSLGCFVSHCGWNSTLESLSSGVPVVAFPHWTDQGTNAKLIEDVWKTGVRMRVNEDGVVESDEIKRCIEIVMDGGEKGEEMRKNAQKWKELARAAVKEGGSSEVNLKAFVLQVSKSC</sequence>